<gene>
    <name type="primary">fba</name>
    <name type="synonym">fbaA</name>
    <name type="ordered locus">MW2049</name>
</gene>
<name>ALF2_STAAW</name>
<proteinExistence type="inferred from homology"/>
<accession>P67478</accession>
<accession>Q99SD3</accession>
<sequence>MPLVSMKEMLIDAKENGYAVGQYNINNLEFTQAILEASQEENAPVILGVSEGAARYMSGFYTIVKMVEGLMHDLNITIPVAIHLDHGSSFEKCKEAIDAGFTSVMIDASHSPFEENVATTKKVVEYAHEKGVSVEAELGTVGGQEDDVVADGIIYADPKECQELVEKTGIDALAPALGSVHGPYKGEPKLGFKEMEEIGLSTGLPLVLHGGTGIPTKDIQKAIPFGTAKINVNTENQIASAKAVRDVLNNDKEVYDPRKYLGPAREAIKETVKGKIKEFGTSNRAK</sequence>
<evidence type="ECO:0000250" key="1"/>
<evidence type="ECO:0000305" key="2"/>
<protein>
    <recommendedName>
        <fullName>Fructose-bisphosphate aldolase</fullName>
        <shortName>FBP aldolase</shortName>
        <shortName>FBPA</shortName>
        <ecNumber>4.1.2.13</ecNumber>
    </recommendedName>
    <alternativeName>
        <fullName>Fructose-1,6-bisphosphate aldolase</fullName>
    </alternativeName>
</protein>
<dbReference type="EC" id="4.1.2.13"/>
<dbReference type="EMBL" id="BA000033">
    <property type="protein sequence ID" value="BAB95914.1"/>
    <property type="molecule type" value="Genomic_DNA"/>
</dbReference>
<dbReference type="SMR" id="P67478"/>
<dbReference type="KEGG" id="sam:MW2049"/>
<dbReference type="HOGENOM" id="CLU_040088_0_1_9"/>
<dbReference type="UniPathway" id="UPA00109">
    <property type="reaction ID" value="UER00183"/>
</dbReference>
<dbReference type="GO" id="GO:0004332">
    <property type="term" value="F:fructose-bisphosphate aldolase activity"/>
    <property type="evidence" value="ECO:0007669"/>
    <property type="project" value="UniProtKB-EC"/>
</dbReference>
<dbReference type="GO" id="GO:0008270">
    <property type="term" value="F:zinc ion binding"/>
    <property type="evidence" value="ECO:0007669"/>
    <property type="project" value="InterPro"/>
</dbReference>
<dbReference type="GO" id="GO:0030388">
    <property type="term" value="P:fructose 1,6-bisphosphate metabolic process"/>
    <property type="evidence" value="ECO:0007669"/>
    <property type="project" value="InterPro"/>
</dbReference>
<dbReference type="GO" id="GO:0006096">
    <property type="term" value="P:glycolytic process"/>
    <property type="evidence" value="ECO:0007669"/>
    <property type="project" value="UniProtKB-UniPathway"/>
</dbReference>
<dbReference type="CDD" id="cd00947">
    <property type="entry name" value="TBP_aldolase_IIB"/>
    <property type="match status" value="1"/>
</dbReference>
<dbReference type="Gene3D" id="3.20.20.70">
    <property type="entry name" value="Aldolase class I"/>
    <property type="match status" value="1"/>
</dbReference>
<dbReference type="InterPro" id="IPR013785">
    <property type="entry name" value="Aldolase_TIM"/>
</dbReference>
<dbReference type="InterPro" id="IPR050246">
    <property type="entry name" value="Class_II_FBP_aldolase"/>
</dbReference>
<dbReference type="InterPro" id="IPR000771">
    <property type="entry name" value="FBA_II"/>
</dbReference>
<dbReference type="InterPro" id="IPR011289">
    <property type="entry name" value="Fruc_bis_ald_class-2"/>
</dbReference>
<dbReference type="NCBIfam" id="TIGR00167">
    <property type="entry name" value="cbbA"/>
    <property type="match status" value="1"/>
</dbReference>
<dbReference type="NCBIfam" id="TIGR01859">
    <property type="entry name" value="fruc_bis_ald"/>
    <property type="match status" value="1"/>
</dbReference>
<dbReference type="NCBIfam" id="NF006376">
    <property type="entry name" value="PRK08610.1"/>
    <property type="match status" value="1"/>
</dbReference>
<dbReference type="PANTHER" id="PTHR30304">
    <property type="entry name" value="D-TAGATOSE-1,6-BISPHOSPHATE ALDOLASE"/>
    <property type="match status" value="1"/>
</dbReference>
<dbReference type="PANTHER" id="PTHR30304:SF0">
    <property type="entry name" value="D-TAGATOSE-1,6-BISPHOSPHATE ALDOLASE SUBUNIT GATY-RELATED"/>
    <property type="match status" value="1"/>
</dbReference>
<dbReference type="Pfam" id="PF01116">
    <property type="entry name" value="F_bP_aldolase"/>
    <property type="match status" value="1"/>
</dbReference>
<dbReference type="PIRSF" id="PIRSF001359">
    <property type="entry name" value="F_bP_aldolase_II"/>
    <property type="match status" value="1"/>
</dbReference>
<dbReference type="SUPFAM" id="SSF51569">
    <property type="entry name" value="Aldolase"/>
    <property type="match status" value="1"/>
</dbReference>
<dbReference type="PROSITE" id="PS00806">
    <property type="entry name" value="ALDOLASE_CLASS_II_2"/>
    <property type="match status" value="1"/>
</dbReference>
<feature type="chain" id="PRO_0000178740" description="Fructose-bisphosphate aldolase">
    <location>
        <begin position="1"/>
        <end position="286"/>
    </location>
</feature>
<feature type="active site" description="Proton donor" evidence="1">
    <location>
        <position position="85"/>
    </location>
</feature>
<feature type="binding site" evidence="1">
    <location>
        <position position="50"/>
    </location>
    <ligand>
        <name>D-glyceraldehyde 3-phosphate</name>
        <dbReference type="ChEBI" id="CHEBI:59776"/>
    </ligand>
</feature>
<feature type="binding site" evidence="1">
    <location>
        <position position="86"/>
    </location>
    <ligand>
        <name>Zn(2+)</name>
        <dbReference type="ChEBI" id="CHEBI:29105"/>
        <label>1</label>
        <note>catalytic</note>
    </ligand>
</feature>
<feature type="binding site" evidence="1">
    <location>
        <position position="107"/>
    </location>
    <ligand>
        <name>Zn(2+)</name>
        <dbReference type="ChEBI" id="CHEBI:29105"/>
        <label>2</label>
    </ligand>
</feature>
<feature type="binding site" evidence="1">
    <location>
        <position position="137"/>
    </location>
    <ligand>
        <name>Zn(2+)</name>
        <dbReference type="ChEBI" id="CHEBI:29105"/>
        <label>2</label>
    </ligand>
</feature>
<feature type="binding site" evidence="1">
    <location>
        <position position="181"/>
    </location>
    <ligand>
        <name>Zn(2+)</name>
        <dbReference type="ChEBI" id="CHEBI:29105"/>
        <label>1</label>
        <note>catalytic</note>
    </ligand>
</feature>
<feature type="binding site" evidence="1">
    <location>
        <position position="182"/>
    </location>
    <ligand>
        <name>dihydroxyacetone phosphate</name>
        <dbReference type="ChEBI" id="CHEBI:57642"/>
    </ligand>
</feature>
<feature type="binding site" evidence="1">
    <location>
        <position position="209"/>
    </location>
    <ligand>
        <name>Zn(2+)</name>
        <dbReference type="ChEBI" id="CHEBI:29105"/>
        <label>1</label>
        <note>catalytic</note>
    </ligand>
</feature>
<feature type="binding site" evidence="1">
    <location>
        <begin position="210"/>
        <end position="212"/>
    </location>
    <ligand>
        <name>dihydroxyacetone phosphate</name>
        <dbReference type="ChEBI" id="CHEBI:57642"/>
    </ligand>
</feature>
<feature type="binding site" evidence="1">
    <location>
        <begin position="231"/>
        <end position="234"/>
    </location>
    <ligand>
        <name>dihydroxyacetone phosphate</name>
        <dbReference type="ChEBI" id="CHEBI:57642"/>
    </ligand>
</feature>
<keyword id="KW-0324">Glycolysis</keyword>
<keyword id="KW-0456">Lyase</keyword>
<keyword id="KW-0479">Metal-binding</keyword>
<keyword id="KW-0862">Zinc</keyword>
<comment type="function">
    <text evidence="1">Catalyzes the aldol condensation of dihydroxyacetone phosphate (DHAP or glycerone-phosphate) with glyceraldehyde 3-phosphate (G3P) to form fructose 1,6-bisphosphate (FBP) in gluconeogenesis and the reverse reaction in glycolysis.</text>
</comment>
<comment type="catalytic activity">
    <reaction>
        <text>beta-D-fructose 1,6-bisphosphate = D-glyceraldehyde 3-phosphate + dihydroxyacetone phosphate</text>
        <dbReference type="Rhea" id="RHEA:14729"/>
        <dbReference type="ChEBI" id="CHEBI:32966"/>
        <dbReference type="ChEBI" id="CHEBI:57642"/>
        <dbReference type="ChEBI" id="CHEBI:59776"/>
        <dbReference type="EC" id="4.1.2.13"/>
    </reaction>
</comment>
<comment type="cofactor">
    <cofactor evidence="1">
        <name>Zn(2+)</name>
        <dbReference type="ChEBI" id="CHEBI:29105"/>
    </cofactor>
    <text evidence="1">Binds 2 Zn(2+) ions per subunit. One is catalytic and the other provides a structural contribution.</text>
</comment>
<comment type="pathway">
    <text>Carbohydrate degradation; glycolysis; D-glyceraldehyde 3-phosphate and glycerone phosphate from D-glucose: step 4/4.</text>
</comment>
<comment type="similarity">
    <text evidence="2">Belongs to the class II fructose-bisphosphate aldolase family.</text>
</comment>
<reference key="1">
    <citation type="journal article" date="2002" name="Lancet">
        <title>Genome and virulence determinants of high virulence community-acquired MRSA.</title>
        <authorList>
            <person name="Baba T."/>
            <person name="Takeuchi F."/>
            <person name="Kuroda M."/>
            <person name="Yuzawa H."/>
            <person name="Aoki K."/>
            <person name="Oguchi A."/>
            <person name="Nagai Y."/>
            <person name="Iwama N."/>
            <person name="Asano K."/>
            <person name="Naimi T."/>
            <person name="Kuroda H."/>
            <person name="Cui L."/>
            <person name="Yamamoto K."/>
            <person name="Hiramatsu K."/>
        </authorList>
    </citation>
    <scope>NUCLEOTIDE SEQUENCE [LARGE SCALE GENOMIC DNA]</scope>
    <source>
        <strain>MW2</strain>
    </source>
</reference>
<organism>
    <name type="scientific">Staphylococcus aureus (strain MW2)</name>
    <dbReference type="NCBI Taxonomy" id="196620"/>
    <lineage>
        <taxon>Bacteria</taxon>
        <taxon>Bacillati</taxon>
        <taxon>Bacillota</taxon>
        <taxon>Bacilli</taxon>
        <taxon>Bacillales</taxon>
        <taxon>Staphylococcaceae</taxon>
        <taxon>Staphylococcus</taxon>
    </lineage>
</organism>